<dbReference type="EC" id="7.1.1.2"/>
<dbReference type="EMBL" id="U17009">
    <property type="protein sequence ID" value="AAF24790.1"/>
    <property type="molecule type" value="Genomic_DNA"/>
</dbReference>
<dbReference type="EMBL" id="U54634">
    <property type="protein sequence ID" value="AAB00440.1"/>
    <property type="molecule type" value="Genomic_DNA"/>
</dbReference>
<dbReference type="RefSeq" id="NP_037617.1">
    <property type="nucleotide sequence ID" value="NC_002387.1"/>
</dbReference>
<dbReference type="SMR" id="Q37598"/>
<dbReference type="GeneID" id="808900"/>
<dbReference type="GO" id="GO:0031966">
    <property type="term" value="C:mitochondrial membrane"/>
    <property type="evidence" value="ECO:0007669"/>
    <property type="project" value="UniProtKB-SubCell"/>
</dbReference>
<dbReference type="GO" id="GO:0030964">
    <property type="term" value="C:NADH dehydrogenase complex"/>
    <property type="evidence" value="ECO:0007669"/>
    <property type="project" value="TreeGrafter"/>
</dbReference>
<dbReference type="GO" id="GO:0008137">
    <property type="term" value="F:NADH dehydrogenase (ubiquinone) activity"/>
    <property type="evidence" value="ECO:0007669"/>
    <property type="project" value="UniProtKB-EC"/>
</dbReference>
<dbReference type="GO" id="GO:0042773">
    <property type="term" value="P:ATP synthesis coupled electron transport"/>
    <property type="evidence" value="ECO:0007669"/>
    <property type="project" value="InterPro"/>
</dbReference>
<dbReference type="Gene3D" id="1.10.287.3510">
    <property type="match status" value="1"/>
</dbReference>
<dbReference type="HAMAP" id="MF_01456">
    <property type="entry name" value="NDH1_NuoK"/>
    <property type="match status" value="1"/>
</dbReference>
<dbReference type="InterPro" id="IPR001133">
    <property type="entry name" value="NADH_UbQ_OxRdtase_chain4L/K"/>
</dbReference>
<dbReference type="InterPro" id="IPR039428">
    <property type="entry name" value="NUOK/Mnh_C1-like"/>
</dbReference>
<dbReference type="NCBIfam" id="NF004320">
    <property type="entry name" value="PRK05715.1-2"/>
    <property type="match status" value="1"/>
</dbReference>
<dbReference type="NCBIfam" id="NF004321">
    <property type="entry name" value="PRK05715.1-3"/>
    <property type="match status" value="1"/>
</dbReference>
<dbReference type="NCBIfam" id="NF004323">
    <property type="entry name" value="PRK05715.1-5"/>
    <property type="match status" value="1"/>
</dbReference>
<dbReference type="PANTHER" id="PTHR11434:SF16">
    <property type="entry name" value="NADH-UBIQUINONE OXIDOREDUCTASE CHAIN 4L"/>
    <property type="match status" value="1"/>
</dbReference>
<dbReference type="PANTHER" id="PTHR11434">
    <property type="entry name" value="NADH-UBIQUINONE OXIDOREDUCTASE SUBUNIT ND4L"/>
    <property type="match status" value="1"/>
</dbReference>
<dbReference type="Pfam" id="PF00420">
    <property type="entry name" value="Oxidored_q2"/>
    <property type="match status" value="1"/>
</dbReference>
<feature type="chain" id="PRO_0000118471" description="NADH-ubiquinone oxidoreductase chain 4L">
    <location>
        <begin position="1"/>
        <end position="100"/>
    </location>
</feature>
<feature type="transmembrane region" description="Helical" evidence="2">
    <location>
        <begin position="3"/>
        <end position="23"/>
    </location>
</feature>
<feature type="transmembrane region" description="Helical" evidence="2">
    <location>
        <begin position="28"/>
        <end position="48"/>
    </location>
</feature>
<feature type="transmembrane region" description="Helical" evidence="2">
    <location>
        <begin position="64"/>
        <end position="84"/>
    </location>
</feature>
<accession>Q37598</accession>
<name>NU4LM_PHYIN</name>
<evidence type="ECO:0000250" key="1"/>
<evidence type="ECO:0000255" key="2"/>
<evidence type="ECO:0000305" key="3"/>
<organism>
    <name type="scientific">Phytophthora infestans</name>
    <name type="common">Potato late blight agent</name>
    <name type="synonym">Botrytis infestans</name>
    <dbReference type="NCBI Taxonomy" id="4787"/>
    <lineage>
        <taxon>Eukaryota</taxon>
        <taxon>Sar</taxon>
        <taxon>Stramenopiles</taxon>
        <taxon>Oomycota</taxon>
        <taxon>Peronosporales</taxon>
        <taxon>Peronosporaceae</taxon>
        <taxon>Phytophthora</taxon>
    </lineage>
</organism>
<geneLocation type="mitochondrion"/>
<sequence length="100" mass="11277">MSILNHFIFTFFLFCLGLFGIILNRQNIIIILMSIELLLLSINLNFIYFAVLIDDIIGQVFSLLILTVAAAESAIGLAIMIVFFKLYGDISIYKINLLSL</sequence>
<comment type="function">
    <text evidence="1">Core subunit of the mitochondrial membrane respiratory chain NADH dehydrogenase (Complex I) that is believed to belong to the minimal assembly required for catalysis. Complex I functions in the transfer of electrons from NADH to the respiratory chain. The immediate electron acceptor for the enzyme is believed to be ubiquinone (By similarity).</text>
</comment>
<comment type="catalytic activity">
    <reaction>
        <text>a ubiquinone + NADH + 5 H(+)(in) = a ubiquinol + NAD(+) + 4 H(+)(out)</text>
        <dbReference type="Rhea" id="RHEA:29091"/>
        <dbReference type="Rhea" id="RHEA-COMP:9565"/>
        <dbReference type="Rhea" id="RHEA-COMP:9566"/>
        <dbReference type="ChEBI" id="CHEBI:15378"/>
        <dbReference type="ChEBI" id="CHEBI:16389"/>
        <dbReference type="ChEBI" id="CHEBI:17976"/>
        <dbReference type="ChEBI" id="CHEBI:57540"/>
        <dbReference type="ChEBI" id="CHEBI:57945"/>
        <dbReference type="EC" id="7.1.1.2"/>
    </reaction>
</comment>
<comment type="subcellular location">
    <subcellularLocation>
        <location evidence="1">Mitochondrion membrane</location>
        <topology evidence="1">Multi-pass membrane protein</topology>
    </subcellularLocation>
</comment>
<comment type="similarity">
    <text evidence="3">Belongs to the complex I subunit 4L family.</text>
</comment>
<keyword id="KW-0249">Electron transport</keyword>
<keyword id="KW-0472">Membrane</keyword>
<keyword id="KW-0496">Mitochondrion</keyword>
<keyword id="KW-0520">NAD</keyword>
<keyword id="KW-0679">Respiratory chain</keyword>
<keyword id="KW-1278">Translocase</keyword>
<keyword id="KW-0812">Transmembrane</keyword>
<keyword id="KW-1133">Transmembrane helix</keyword>
<keyword id="KW-0813">Transport</keyword>
<keyword id="KW-0830">Ubiquinone</keyword>
<reference key="1">
    <citation type="book" date="1992" name="Genetic maps">
        <title>The mitochondrial genome of Phytophthora infestans.</title>
        <editorList>
            <person name="O'Brien S.J."/>
        </editorList>
        <authorList>
            <person name="Lang B.F."/>
            <person name="Forget L."/>
        </authorList>
    </citation>
    <scope>NUCLEOTIDE SEQUENCE [GENOMIC DNA]</scope>
    <source>
        <strain>ATCC 16981 / West Virginia 4</strain>
    </source>
</reference>
<reference key="2">
    <citation type="submission" date="1996-04" db="EMBL/GenBank/DDBJ databases">
        <authorList>
            <person name="Chesnick J.M."/>
            <person name="Tuxbury K."/>
            <person name="Coleman A."/>
            <person name="Burger G."/>
            <person name="Lang B.F."/>
        </authorList>
    </citation>
    <scope>NUCLEOTIDE SEQUENCE [GENOMIC DNA]</scope>
    <source>
        <strain>ATCC 16981 / West Virginia 4</strain>
    </source>
</reference>
<gene>
    <name type="primary">ND4L</name>
    <name type="synonym">NAD4L</name>
</gene>
<protein>
    <recommendedName>
        <fullName>NADH-ubiquinone oxidoreductase chain 4L</fullName>
        <ecNumber>7.1.1.2</ecNumber>
    </recommendedName>
    <alternativeName>
        <fullName>NADH dehydrogenase subunit 4L</fullName>
    </alternativeName>
</protein>
<proteinExistence type="inferred from homology"/>